<protein>
    <recommendedName>
        <fullName>Bacterial non-heme ferritin</fullName>
        <ecNumber>1.16.3.2</ecNumber>
    </recommendedName>
</protein>
<name>FTN_CAMJE</name>
<accession>Q46106</accession>
<accession>Q0PAQ5</accession>
<comment type="function">
    <text>Iron-storage protein.</text>
</comment>
<comment type="catalytic activity">
    <reaction>
        <text>4 Fe(2+) + O2 + 6 H2O = 4 iron(III) oxide-hydroxide + 12 H(+)</text>
        <dbReference type="Rhea" id="RHEA:11972"/>
        <dbReference type="ChEBI" id="CHEBI:15377"/>
        <dbReference type="ChEBI" id="CHEBI:15378"/>
        <dbReference type="ChEBI" id="CHEBI:15379"/>
        <dbReference type="ChEBI" id="CHEBI:29033"/>
        <dbReference type="ChEBI" id="CHEBI:78619"/>
        <dbReference type="EC" id="1.16.3.2"/>
    </reaction>
</comment>
<comment type="subunit">
    <text evidence="1">Homooligomer of 24 subunits that assemble into a spherical protein shell (12 +/- 1 nM diameter) that can sequester at least 2000 iron atoms.</text>
</comment>
<comment type="subcellular location">
    <subcellularLocation>
        <location>Cytoplasm</location>
    </subcellularLocation>
</comment>
<comment type="similarity">
    <text evidence="3">Belongs to the ferritin family. Prokaryotic subfamily.</text>
</comment>
<gene>
    <name type="primary">ftn</name>
    <name type="synonym">cft</name>
    <name type="ordered locus">Cj0612c</name>
</gene>
<organism>
    <name type="scientific">Campylobacter jejuni subsp. jejuni serotype O:2 (strain ATCC 700819 / NCTC 11168)</name>
    <dbReference type="NCBI Taxonomy" id="192222"/>
    <lineage>
        <taxon>Bacteria</taxon>
        <taxon>Pseudomonadati</taxon>
        <taxon>Campylobacterota</taxon>
        <taxon>Epsilonproteobacteria</taxon>
        <taxon>Campylobacterales</taxon>
        <taxon>Campylobacteraceae</taxon>
        <taxon>Campylobacter</taxon>
    </lineage>
</organism>
<sequence length="167" mass="19486">MLSKEVVKLLNEQINKEMYAANLYLSMSSWCYENSLDGAGAFLFAHASEESDHAKKLITYLNETDSHVELQEVKQPEQNFKSLLDVFEKTYEHEQFITKSINTLVEHMLTHKDYSTFNFLQWYVSEQHEEEALFRGIVDKIKLIGEHGNGLYLADQYIKNIALSRKK</sequence>
<keyword id="KW-0002">3D-structure</keyword>
<keyword id="KW-0963">Cytoplasm</keyword>
<keyword id="KW-0408">Iron</keyword>
<keyword id="KW-0409">Iron storage</keyword>
<keyword id="KW-0479">Metal-binding</keyword>
<keyword id="KW-0560">Oxidoreductase</keyword>
<keyword id="KW-1185">Reference proteome</keyword>
<dbReference type="EC" id="1.16.3.2"/>
<dbReference type="EMBL" id="D64082">
    <property type="protein sequence ID" value="BAA10964.1"/>
    <property type="molecule type" value="Genomic_DNA"/>
</dbReference>
<dbReference type="EMBL" id="AL111168">
    <property type="protein sequence ID" value="CAL34758.1"/>
    <property type="molecule type" value="Genomic_DNA"/>
</dbReference>
<dbReference type="PIR" id="S77578">
    <property type="entry name" value="S77578"/>
</dbReference>
<dbReference type="RefSeq" id="YP_002344042.1">
    <property type="nucleotide sequence ID" value="NC_002163.1"/>
</dbReference>
<dbReference type="PDB" id="1KRQ">
    <property type="method" value="X-ray"/>
    <property type="resolution" value="2.70 A"/>
    <property type="chains" value="A=1-167"/>
</dbReference>
<dbReference type="PDBsum" id="1KRQ"/>
<dbReference type="SMR" id="Q46106"/>
<dbReference type="STRING" id="192222.Cj0612c"/>
<dbReference type="PaxDb" id="192222-Cj0612c"/>
<dbReference type="EnsemblBacteria" id="CAL34758">
    <property type="protein sequence ID" value="CAL34758"/>
    <property type="gene ID" value="Cj0612c"/>
</dbReference>
<dbReference type="GeneID" id="904939"/>
<dbReference type="KEGG" id="cje:Cj0612c"/>
<dbReference type="PATRIC" id="fig|192222.6.peg.604"/>
<dbReference type="eggNOG" id="COG1528">
    <property type="taxonomic scope" value="Bacteria"/>
</dbReference>
<dbReference type="HOGENOM" id="CLU_065681_1_0_7"/>
<dbReference type="OrthoDB" id="9801481at2"/>
<dbReference type="EvolutionaryTrace" id="Q46106"/>
<dbReference type="Proteomes" id="UP000000799">
    <property type="component" value="Chromosome"/>
</dbReference>
<dbReference type="GO" id="GO:0005829">
    <property type="term" value="C:cytosol"/>
    <property type="evidence" value="ECO:0007669"/>
    <property type="project" value="TreeGrafter"/>
</dbReference>
<dbReference type="GO" id="GO:0008199">
    <property type="term" value="F:ferric iron binding"/>
    <property type="evidence" value="ECO:0007669"/>
    <property type="project" value="InterPro"/>
</dbReference>
<dbReference type="GO" id="GO:0008198">
    <property type="term" value="F:ferrous iron binding"/>
    <property type="evidence" value="ECO:0007669"/>
    <property type="project" value="TreeGrafter"/>
</dbReference>
<dbReference type="GO" id="GO:0004322">
    <property type="term" value="F:ferroxidase activity"/>
    <property type="evidence" value="ECO:0007669"/>
    <property type="project" value="TreeGrafter"/>
</dbReference>
<dbReference type="GO" id="GO:0006879">
    <property type="term" value="P:intracellular iron ion homeostasis"/>
    <property type="evidence" value="ECO:0007669"/>
    <property type="project" value="UniProtKB-KW"/>
</dbReference>
<dbReference type="GO" id="GO:0006826">
    <property type="term" value="P:iron ion transport"/>
    <property type="evidence" value="ECO:0007669"/>
    <property type="project" value="InterPro"/>
</dbReference>
<dbReference type="CDD" id="cd01055">
    <property type="entry name" value="Nonheme_Ferritin"/>
    <property type="match status" value="1"/>
</dbReference>
<dbReference type="FunFam" id="1.20.1260.10:FF:000001">
    <property type="entry name" value="Non-heme ferritin"/>
    <property type="match status" value="1"/>
</dbReference>
<dbReference type="Gene3D" id="1.20.1260.10">
    <property type="match status" value="1"/>
</dbReference>
<dbReference type="InterPro" id="IPR001519">
    <property type="entry name" value="Ferritin"/>
</dbReference>
<dbReference type="InterPro" id="IPR012347">
    <property type="entry name" value="Ferritin-like"/>
</dbReference>
<dbReference type="InterPro" id="IPR009040">
    <property type="entry name" value="Ferritin-like_diiron"/>
</dbReference>
<dbReference type="InterPro" id="IPR009078">
    <property type="entry name" value="Ferritin-like_SF"/>
</dbReference>
<dbReference type="InterPro" id="IPR008331">
    <property type="entry name" value="Ferritin_DPS_dom"/>
</dbReference>
<dbReference type="InterPro" id="IPR041719">
    <property type="entry name" value="Ferritin_prok"/>
</dbReference>
<dbReference type="PANTHER" id="PTHR11431:SF127">
    <property type="entry name" value="BACTERIAL NON-HEME FERRITIN"/>
    <property type="match status" value="1"/>
</dbReference>
<dbReference type="PANTHER" id="PTHR11431">
    <property type="entry name" value="FERRITIN"/>
    <property type="match status" value="1"/>
</dbReference>
<dbReference type="Pfam" id="PF00210">
    <property type="entry name" value="Ferritin"/>
    <property type="match status" value="1"/>
</dbReference>
<dbReference type="SUPFAM" id="SSF47240">
    <property type="entry name" value="Ferritin-like"/>
    <property type="match status" value="1"/>
</dbReference>
<dbReference type="PROSITE" id="PS50905">
    <property type="entry name" value="FERRITIN_LIKE"/>
    <property type="match status" value="1"/>
</dbReference>
<feature type="chain" id="PRO_0000201095" description="Bacterial non-heme ferritin">
    <location>
        <begin position="1"/>
        <end position="167"/>
    </location>
</feature>
<feature type="domain" description="Ferritin-like diiron" evidence="2">
    <location>
        <begin position="1"/>
        <end position="145"/>
    </location>
</feature>
<feature type="binding site" evidence="2">
    <location>
        <position position="17"/>
    </location>
    <ligand>
        <name>Fe cation</name>
        <dbReference type="ChEBI" id="CHEBI:24875"/>
        <label>1</label>
    </ligand>
</feature>
<feature type="binding site" evidence="2">
    <location>
        <position position="50"/>
    </location>
    <ligand>
        <name>Fe cation</name>
        <dbReference type="ChEBI" id="CHEBI:24875"/>
        <label>1</label>
    </ligand>
</feature>
<feature type="binding site" evidence="2">
    <location>
        <position position="50"/>
    </location>
    <ligand>
        <name>Fe cation</name>
        <dbReference type="ChEBI" id="CHEBI:24875"/>
        <label>2</label>
    </ligand>
</feature>
<feature type="binding site" evidence="2">
    <location>
        <position position="53"/>
    </location>
    <ligand>
        <name>Fe cation</name>
        <dbReference type="ChEBI" id="CHEBI:24875"/>
        <label>1</label>
    </ligand>
</feature>
<feature type="binding site" evidence="2">
    <location>
        <position position="94"/>
    </location>
    <ligand>
        <name>Fe cation</name>
        <dbReference type="ChEBI" id="CHEBI:24875"/>
        <label>2</label>
    </ligand>
</feature>
<feature type="binding site" evidence="2">
    <location>
        <position position="127"/>
    </location>
    <ligand>
        <name>Fe cation</name>
        <dbReference type="ChEBI" id="CHEBI:24875"/>
        <label>2</label>
    </ligand>
</feature>
<feature type="helix" evidence="4">
    <location>
        <begin position="4"/>
        <end position="33"/>
    </location>
</feature>
<feature type="helix" evidence="4">
    <location>
        <begin position="37"/>
        <end position="62"/>
    </location>
</feature>
<feature type="turn" evidence="4">
    <location>
        <begin position="63"/>
        <end position="65"/>
    </location>
</feature>
<feature type="helix" evidence="4">
    <location>
        <begin position="83"/>
        <end position="110"/>
    </location>
</feature>
<feature type="helix" evidence="4">
    <location>
        <begin position="114"/>
        <end position="119"/>
    </location>
</feature>
<feature type="helix" evidence="4">
    <location>
        <begin position="121"/>
        <end position="144"/>
    </location>
</feature>
<feature type="turn" evidence="4">
    <location>
        <begin position="147"/>
        <end position="149"/>
    </location>
</feature>
<feature type="helix" evidence="4">
    <location>
        <begin position="150"/>
        <end position="163"/>
    </location>
</feature>
<reference key="1">
    <citation type="journal article" date="1996" name="Mol. Microbiol.">
        <title>Construction of a ferritin-deficient mutant of Campylobacter jejuni: contribution of ferritin to iron storage and protection against oxidative stress.</title>
        <authorList>
            <person name="Wai S."/>
            <person name="Nakayama K."/>
            <person name="Umene K."/>
            <person name="Moriya T."/>
            <person name="Amako K."/>
        </authorList>
    </citation>
    <scope>NUCLEOTIDE SEQUENCE [GENOMIC DNA]</scope>
</reference>
<reference key="2">
    <citation type="journal article" date="2000" name="Nature">
        <title>The genome sequence of the food-borne pathogen Campylobacter jejuni reveals hypervariable sequences.</title>
        <authorList>
            <person name="Parkhill J."/>
            <person name="Wren B.W."/>
            <person name="Mungall K.L."/>
            <person name="Ketley J.M."/>
            <person name="Churcher C.M."/>
            <person name="Basham D."/>
            <person name="Chillingworth T."/>
            <person name="Davies R.M."/>
            <person name="Feltwell T."/>
            <person name="Holroyd S."/>
            <person name="Jagels K."/>
            <person name="Karlyshev A.V."/>
            <person name="Moule S."/>
            <person name="Pallen M.J."/>
            <person name="Penn C.W."/>
            <person name="Quail M.A."/>
            <person name="Rajandream M.A."/>
            <person name="Rutherford K.M."/>
            <person name="van Vliet A.H.M."/>
            <person name="Whitehead S."/>
            <person name="Barrell B.G."/>
        </authorList>
    </citation>
    <scope>NUCLEOTIDE SEQUENCE [LARGE SCALE GENOMIC DNA]</scope>
    <source>
        <strain>ATCC 700819 / NCTC 11168</strain>
    </source>
</reference>
<evidence type="ECO:0000250" key="1"/>
<evidence type="ECO:0000255" key="2">
    <source>
        <dbReference type="PROSITE-ProRule" id="PRU00085"/>
    </source>
</evidence>
<evidence type="ECO:0000305" key="3"/>
<evidence type="ECO:0007829" key="4">
    <source>
        <dbReference type="PDB" id="1KRQ"/>
    </source>
</evidence>
<proteinExistence type="evidence at protein level"/>